<keyword id="KW-0030">Aminoacyl-tRNA synthetase</keyword>
<keyword id="KW-0067">ATP-binding</keyword>
<keyword id="KW-0963">Cytoplasm</keyword>
<keyword id="KW-0436">Ligase</keyword>
<keyword id="KW-0479">Metal-binding</keyword>
<keyword id="KW-0547">Nucleotide-binding</keyword>
<keyword id="KW-0648">Protein biosynthesis</keyword>
<keyword id="KW-0694">RNA-binding</keyword>
<keyword id="KW-0820">tRNA-binding</keyword>
<keyword id="KW-0862">Zinc</keyword>
<dbReference type="EC" id="6.1.1.3" evidence="1"/>
<dbReference type="EMBL" id="CP000848">
    <property type="protein sequence ID" value="ABV75908.1"/>
    <property type="molecule type" value="Genomic_DNA"/>
</dbReference>
<dbReference type="RefSeq" id="WP_012150512.1">
    <property type="nucleotide sequence ID" value="NZ_CP121767.1"/>
</dbReference>
<dbReference type="SMR" id="A8GR83"/>
<dbReference type="GeneID" id="79937076"/>
<dbReference type="KEGG" id="rri:A1G_01690"/>
<dbReference type="HOGENOM" id="CLU_008554_0_1_5"/>
<dbReference type="Proteomes" id="UP000006832">
    <property type="component" value="Chromosome"/>
</dbReference>
<dbReference type="GO" id="GO:0005737">
    <property type="term" value="C:cytoplasm"/>
    <property type="evidence" value="ECO:0007669"/>
    <property type="project" value="UniProtKB-SubCell"/>
</dbReference>
<dbReference type="GO" id="GO:0005524">
    <property type="term" value="F:ATP binding"/>
    <property type="evidence" value="ECO:0007669"/>
    <property type="project" value="UniProtKB-UniRule"/>
</dbReference>
<dbReference type="GO" id="GO:0046872">
    <property type="term" value="F:metal ion binding"/>
    <property type="evidence" value="ECO:0007669"/>
    <property type="project" value="UniProtKB-KW"/>
</dbReference>
<dbReference type="GO" id="GO:0004829">
    <property type="term" value="F:threonine-tRNA ligase activity"/>
    <property type="evidence" value="ECO:0007669"/>
    <property type="project" value="UniProtKB-UniRule"/>
</dbReference>
<dbReference type="GO" id="GO:0000049">
    <property type="term" value="F:tRNA binding"/>
    <property type="evidence" value="ECO:0007669"/>
    <property type="project" value="UniProtKB-KW"/>
</dbReference>
<dbReference type="GO" id="GO:0006435">
    <property type="term" value="P:threonyl-tRNA aminoacylation"/>
    <property type="evidence" value="ECO:0007669"/>
    <property type="project" value="UniProtKB-UniRule"/>
</dbReference>
<dbReference type="CDD" id="cd01667">
    <property type="entry name" value="TGS_ThrRS"/>
    <property type="match status" value="1"/>
</dbReference>
<dbReference type="CDD" id="cd00860">
    <property type="entry name" value="ThrRS_anticodon"/>
    <property type="match status" value="1"/>
</dbReference>
<dbReference type="CDD" id="cd00771">
    <property type="entry name" value="ThrRS_core"/>
    <property type="match status" value="1"/>
</dbReference>
<dbReference type="FunFam" id="3.10.20.30:FF:000005">
    <property type="entry name" value="Threonine--tRNA ligase"/>
    <property type="match status" value="1"/>
</dbReference>
<dbReference type="FunFam" id="3.30.54.20:FF:000002">
    <property type="entry name" value="Threonine--tRNA ligase"/>
    <property type="match status" value="1"/>
</dbReference>
<dbReference type="FunFam" id="3.30.930.10:FF:000002">
    <property type="entry name" value="Threonine--tRNA ligase"/>
    <property type="match status" value="1"/>
</dbReference>
<dbReference type="FunFam" id="3.40.50.800:FF:000001">
    <property type="entry name" value="Threonine--tRNA ligase"/>
    <property type="match status" value="1"/>
</dbReference>
<dbReference type="FunFam" id="3.30.980.10:FF:000005">
    <property type="entry name" value="Threonyl-tRNA synthetase, mitochondrial"/>
    <property type="match status" value="1"/>
</dbReference>
<dbReference type="Gene3D" id="3.10.20.30">
    <property type="match status" value="1"/>
</dbReference>
<dbReference type="Gene3D" id="3.30.54.20">
    <property type="match status" value="1"/>
</dbReference>
<dbReference type="Gene3D" id="3.40.50.800">
    <property type="entry name" value="Anticodon-binding domain"/>
    <property type="match status" value="1"/>
</dbReference>
<dbReference type="Gene3D" id="3.30.930.10">
    <property type="entry name" value="Bira Bifunctional Protein, Domain 2"/>
    <property type="match status" value="1"/>
</dbReference>
<dbReference type="Gene3D" id="3.30.980.10">
    <property type="entry name" value="Threonyl-trna Synthetase, Chain A, domain 2"/>
    <property type="match status" value="1"/>
</dbReference>
<dbReference type="HAMAP" id="MF_00184">
    <property type="entry name" value="Thr_tRNA_synth"/>
    <property type="match status" value="1"/>
</dbReference>
<dbReference type="InterPro" id="IPR002314">
    <property type="entry name" value="aa-tRNA-synt_IIb"/>
</dbReference>
<dbReference type="InterPro" id="IPR006195">
    <property type="entry name" value="aa-tRNA-synth_II"/>
</dbReference>
<dbReference type="InterPro" id="IPR045864">
    <property type="entry name" value="aa-tRNA-synth_II/BPL/LPL"/>
</dbReference>
<dbReference type="InterPro" id="IPR004154">
    <property type="entry name" value="Anticodon-bd"/>
</dbReference>
<dbReference type="InterPro" id="IPR036621">
    <property type="entry name" value="Anticodon-bd_dom_sf"/>
</dbReference>
<dbReference type="InterPro" id="IPR012675">
    <property type="entry name" value="Beta-grasp_dom_sf"/>
</dbReference>
<dbReference type="InterPro" id="IPR004095">
    <property type="entry name" value="TGS"/>
</dbReference>
<dbReference type="InterPro" id="IPR012676">
    <property type="entry name" value="TGS-like"/>
</dbReference>
<dbReference type="InterPro" id="IPR002320">
    <property type="entry name" value="Thr-tRNA-ligase_IIa"/>
</dbReference>
<dbReference type="InterPro" id="IPR018163">
    <property type="entry name" value="Thr/Ala-tRNA-synth_IIc_edit"/>
</dbReference>
<dbReference type="InterPro" id="IPR047246">
    <property type="entry name" value="ThrRS_anticodon"/>
</dbReference>
<dbReference type="InterPro" id="IPR033728">
    <property type="entry name" value="ThrRS_core"/>
</dbReference>
<dbReference type="InterPro" id="IPR012947">
    <property type="entry name" value="tRNA_SAD"/>
</dbReference>
<dbReference type="NCBIfam" id="TIGR00418">
    <property type="entry name" value="thrS"/>
    <property type="match status" value="1"/>
</dbReference>
<dbReference type="PANTHER" id="PTHR11451:SF44">
    <property type="entry name" value="THREONINE--TRNA LIGASE, CHLOROPLASTIC_MITOCHONDRIAL 2"/>
    <property type="match status" value="1"/>
</dbReference>
<dbReference type="PANTHER" id="PTHR11451">
    <property type="entry name" value="THREONINE-TRNA LIGASE"/>
    <property type="match status" value="1"/>
</dbReference>
<dbReference type="Pfam" id="PF03129">
    <property type="entry name" value="HGTP_anticodon"/>
    <property type="match status" value="1"/>
</dbReference>
<dbReference type="Pfam" id="PF02824">
    <property type="entry name" value="TGS"/>
    <property type="match status" value="1"/>
</dbReference>
<dbReference type="Pfam" id="PF00587">
    <property type="entry name" value="tRNA-synt_2b"/>
    <property type="match status" value="1"/>
</dbReference>
<dbReference type="Pfam" id="PF07973">
    <property type="entry name" value="tRNA_SAD"/>
    <property type="match status" value="1"/>
</dbReference>
<dbReference type="PRINTS" id="PR01047">
    <property type="entry name" value="TRNASYNTHTHR"/>
</dbReference>
<dbReference type="SMART" id="SM00863">
    <property type="entry name" value="tRNA_SAD"/>
    <property type="match status" value="1"/>
</dbReference>
<dbReference type="SUPFAM" id="SSF52954">
    <property type="entry name" value="Class II aaRS ABD-related"/>
    <property type="match status" value="1"/>
</dbReference>
<dbReference type="SUPFAM" id="SSF55681">
    <property type="entry name" value="Class II aaRS and biotin synthetases"/>
    <property type="match status" value="1"/>
</dbReference>
<dbReference type="SUPFAM" id="SSF81271">
    <property type="entry name" value="TGS-like"/>
    <property type="match status" value="1"/>
</dbReference>
<dbReference type="SUPFAM" id="SSF55186">
    <property type="entry name" value="ThrRS/AlaRS common domain"/>
    <property type="match status" value="1"/>
</dbReference>
<dbReference type="PROSITE" id="PS50862">
    <property type="entry name" value="AA_TRNA_LIGASE_II"/>
    <property type="match status" value="1"/>
</dbReference>
<dbReference type="PROSITE" id="PS51880">
    <property type="entry name" value="TGS"/>
    <property type="match status" value="1"/>
</dbReference>
<protein>
    <recommendedName>
        <fullName evidence="1">Threonine--tRNA ligase</fullName>
        <ecNumber evidence="1">6.1.1.3</ecNumber>
    </recommendedName>
    <alternativeName>
        <fullName evidence="1">Threonyl-tRNA synthetase</fullName>
        <shortName evidence="1">ThrRS</shortName>
    </alternativeName>
</protein>
<proteinExistence type="inferred from homology"/>
<organism>
    <name type="scientific">Rickettsia rickettsii (strain Sheila Smith)</name>
    <dbReference type="NCBI Taxonomy" id="392021"/>
    <lineage>
        <taxon>Bacteria</taxon>
        <taxon>Pseudomonadati</taxon>
        <taxon>Pseudomonadota</taxon>
        <taxon>Alphaproteobacteria</taxon>
        <taxon>Rickettsiales</taxon>
        <taxon>Rickettsiaceae</taxon>
        <taxon>Rickettsieae</taxon>
        <taxon>Rickettsia</taxon>
        <taxon>spotted fever group</taxon>
    </lineage>
</organism>
<reference key="1">
    <citation type="submission" date="2007-09" db="EMBL/GenBank/DDBJ databases">
        <title>Complete genome sequence of Rickettsia rickettsii.</title>
        <authorList>
            <person name="Madan A."/>
            <person name="Fahey J."/>
            <person name="Helton E."/>
            <person name="Ketteman M."/>
            <person name="Madan A."/>
            <person name="Rodrigues S."/>
            <person name="Sanchez A."/>
            <person name="Dasch G."/>
            <person name="Eremeeva M."/>
        </authorList>
    </citation>
    <scope>NUCLEOTIDE SEQUENCE [LARGE SCALE GENOMIC DNA]</scope>
    <source>
        <strain>Sheila Smith</strain>
    </source>
</reference>
<sequence>MINISFPDGSIKQFAKNITAYEVANAISMSLAKAAMVAEINGELQDLSIVIDNDCKFRILTAKDPECLEIIRHDAAHLTAEAVKELFPETQVTIGPAIENGYYYDFARDKPFTNDDLAVIEAKMQELSQKNEQVTRELWDRDKAVEFFKSIGEHYKAEIIASIPAGEPITLYRQGNFIDLCRGPHSPSTGVVKHFKLMKVAGAYWRGDSRNEMLQRIYGTAWATKEQLDSYLLMLEEAEKRDHRKLGRELDLFHFQEEAQGMVFWHDKGWSIYNTIEQYIRKKIRKNGYTEVKTPVLVDKSLWEASGHWEKFRDDMFALETDDKTLALKPMNCPCHVQIFKQGIKSYRDLPLRMSEFGLCHRNEASGALHGLMRVRSLVQDDAHIFCAAEQITDETVSFCKLLTEVYKDFGFTDIKVKFSDRPEIRAGSNEVWDKAENALKEAVEQAGFTYTLNPGEGAFYGPKLEFVLTDAIGRQWQCGTLQMDFVLPERLDASYVAASGEKKRPVMLHRAILGSLERFIGILIEEYAGRFPLWLAPVQVAIATITSDLNDYALEVQKALIDNGVRTDFNISPDKINYKIREFSNQKIPMIAVIGKQEQENKQVAIRRLGTTDQEVLSVEQLIAVVKEENEKYL</sequence>
<comment type="function">
    <text evidence="1">Catalyzes the attachment of threonine to tRNA(Thr) in a two-step reaction: L-threonine is first activated by ATP to form Thr-AMP and then transferred to the acceptor end of tRNA(Thr). Also edits incorrectly charged L-seryl-tRNA(Thr).</text>
</comment>
<comment type="catalytic activity">
    <reaction evidence="1">
        <text>tRNA(Thr) + L-threonine + ATP = L-threonyl-tRNA(Thr) + AMP + diphosphate + H(+)</text>
        <dbReference type="Rhea" id="RHEA:24624"/>
        <dbReference type="Rhea" id="RHEA-COMP:9670"/>
        <dbReference type="Rhea" id="RHEA-COMP:9704"/>
        <dbReference type="ChEBI" id="CHEBI:15378"/>
        <dbReference type="ChEBI" id="CHEBI:30616"/>
        <dbReference type="ChEBI" id="CHEBI:33019"/>
        <dbReference type="ChEBI" id="CHEBI:57926"/>
        <dbReference type="ChEBI" id="CHEBI:78442"/>
        <dbReference type="ChEBI" id="CHEBI:78534"/>
        <dbReference type="ChEBI" id="CHEBI:456215"/>
        <dbReference type="EC" id="6.1.1.3"/>
    </reaction>
</comment>
<comment type="cofactor">
    <cofactor evidence="1">
        <name>Zn(2+)</name>
        <dbReference type="ChEBI" id="CHEBI:29105"/>
    </cofactor>
    <text evidence="1">Binds 1 zinc ion per subunit.</text>
</comment>
<comment type="subunit">
    <text evidence="1">Homodimer.</text>
</comment>
<comment type="subcellular location">
    <subcellularLocation>
        <location evidence="1">Cytoplasm</location>
    </subcellularLocation>
</comment>
<comment type="similarity">
    <text evidence="1">Belongs to the class-II aminoacyl-tRNA synthetase family.</text>
</comment>
<accession>A8GR83</accession>
<evidence type="ECO:0000255" key="1">
    <source>
        <dbReference type="HAMAP-Rule" id="MF_00184"/>
    </source>
</evidence>
<evidence type="ECO:0000255" key="2">
    <source>
        <dbReference type="PROSITE-ProRule" id="PRU01228"/>
    </source>
</evidence>
<name>SYT_RICRS</name>
<gene>
    <name evidence="1" type="primary">thrS</name>
    <name type="ordered locus">A1G_01690</name>
</gene>
<feature type="chain" id="PRO_1000020496" description="Threonine--tRNA ligase">
    <location>
        <begin position="1"/>
        <end position="635"/>
    </location>
</feature>
<feature type="domain" description="TGS" evidence="2">
    <location>
        <begin position="1"/>
        <end position="61"/>
    </location>
</feature>
<feature type="region of interest" description="Catalytic" evidence="1">
    <location>
        <begin position="242"/>
        <end position="533"/>
    </location>
</feature>
<feature type="binding site" evidence="1">
    <location>
        <position position="333"/>
    </location>
    <ligand>
        <name>Zn(2+)</name>
        <dbReference type="ChEBI" id="CHEBI:29105"/>
    </ligand>
</feature>
<feature type="binding site" evidence="1">
    <location>
        <position position="384"/>
    </location>
    <ligand>
        <name>Zn(2+)</name>
        <dbReference type="ChEBI" id="CHEBI:29105"/>
    </ligand>
</feature>
<feature type="binding site" evidence="1">
    <location>
        <position position="510"/>
    </location>
    <ligand>
        <name>Zn(2+)</name>
        <dbReference type="ChEBI" id="CHEBI:29105"/>
    </ligand>
</feature>